<comment type="function">
    <text evidence="1">Probable oxidase that might be involved in lipid metabolism.</text>
</comment>
<comment type="cofactor">
    <cofactor evidence="1">
        <name>Fe cation</name>
        <dbReference type="ChEBI" id="CHEBI:24875"/>
    </cofactor>
    <text evidence="1">Binds 1 Fe cation per subunit.</text>
</comment>
<comment type="cofactor">
    <cofactor evidence="1">
        <name>Mn(2+)</name>
        <dbReference type="ChEBI" id="CHEBI:29035"/>
    </cofactor>
    <text evidence="1">Binds 1 manganese ion per subunit. The iron and manganese ions form a dinuclear manganese-iron cluster.</text>
</comment>
<comment type="subunit">
    <text evidence="1">Homodimer.</text>
</comment>
<comment type="similarity">
    <text evidence="2">Belongs to the ribonucleoside diphosphate reductase small chain family. R2-like ligand binding oxidase subfamily.</text>
</comment>
<keyword id="KW-0408">Iron</keyword>
<keyword id="KW-0449">Lipoprotein</keyword>
<keyword id="KW-0464">Manganese</keyword>
<keyword id="KW-0479">Metal-binding</keyword>
<keyword id="KW-0560">Oxidoreductase</keyword>
<keyword id="KW-1185">Reference proteome</keyword>
<proteinExistence type="inferred from homology"/>
<reference key="1">
    <citation type="journal article" date="2002" name="J. Bacteriol.">
        <title>Whole-genome comparison of Mycobacterium tuberculosis clinical and laboratory strains.</title>
        <authorList>
            <person name="Fleischmann R.D."/>
            <person name="Alland D."/>
            <person name="Eisen J.A."/>
            <person name="Carpenter L."/>
            <person name="White O."/>
            <person name="Peterson J.D."/>
            <person name="DeBoy R.T."/>
            <person name="Dodson R.J."/>
            <person name="Gwinn M.L."/>
            <person name="Haft D.H."/>
            <person name="Hickey E.K."/>
            <person name="Kolonay J.F."/>
            <person name="Nelson W.C."/>
            <person name="Umayam L.A."/>
            <person name="Ermolaeva M.D."/>
            <person name="Salzberg S.L."/>
            <person name="Delcher A."/>
            <person name="Utterback T.R."/>
            <person name="Weidman J.F."/>
            <person name="Khouri H.M."/>
            <person name="Gill J."/>
            <person name="Mikula A."/>
            <person name="Bishai W."/>
            <person name="Jacobs W.R. Jr."/>
            <person name="Venter J.C."/>
            <person name="Fraser C.M."/>
        </authorList>
    </citation>
    <scope>NUCLEOTIDE SEQUENCE [LARGE SCALE GENOMIC DNA]</scope>
    <source>
        <strain>CDC 1551 / Oshkosh</strain>
    </source>
</reference>
<feature type="chain" id="PRO_0000428239" description="R2-like ligand binding oxidase">
    <location>
        <begin position="1"/>
        <end position="314"/>
    </location>
</feature>
<feature type="binding site" evidence="1">
    <location>
        <position position="68"/>
    </location>
    <ligand>
        <name>Mn(2+)</name>
        <dbReference type="ChEBI" id="CHEBI:29035"/>
    </ligand>
</feature>
<feature type="binding site" evidence="1">
    <location>
        <position position="101"/>
    </location>
    <ligand>
        <name>Fe cation</name>
        <dbReference type="ChEBI" id="CHEBI:24875"/>
    </ligand>
</feature>
<feature type="binding site" evidence="1">
    <location>
        <position position="101"/>
    </location>
    <ligand>
        <name>Mn(2+)</name>
        <dbReference type="ChEBI" id="CHEBI:29035"/>
    </ligand>
</feature>
<feature type="binding site" evidence="1">
    <location>
        <position position="104"/>
    </location>
    <ligand>
        <name>Mn(2+)</name>
        <dbReference type="ChEBI" id="CHEBI:29035"/>
    </ligand>
</feature>
<feature type="binding site" evidence="1">
    <location>
        <position position="167"/>
    </location>
    <ligand>
        <name>Fe cation</name>
        <dbReference type="ChEBI" id="CHEBI:24875"/>
    </ligand>
</feature>
<feature type="binding site" evidence="1">
    <location>
        <position position="202"/>
    </location>
    <ligand>
        <name>Fe cation</name>
        <dbReference type="ChEBI" id="CHEBI:24875"/>
    </ligand>
</feature>
<feature type="binding site" evidence="1">
    <location>
        <position position="205"/>
    </location>
    <ligand>
        <name>Fe cation</name>
        <dbReference type="ChEBI" id="CHEBI:24875"/>
    </ligand>
</feature>
<feature type="cross-link" description="3-(O4'-tyrosyl)-valine (Val-Tyr)" evidence="1">
    <location>
        <begin position="71"/>
        <end position="162"/>
    </location>
</feature>
<name>RIR2H_MYCTO</name>
<evidence type="ECO:0000250" key="1">
    <source>
        <dbReference type="UniProtKB" id="P9WH69"/>
    </source>
</evidence>
<evidence type="ECO:0000305" key="2"/>
<protein>
    <recommendedName>
        <fullName evidence="1">R2-like ligand binding oxidase</fullName>
        <ecNumber evidence="1">1.-.-.-</ecNumber>
    </recommendedName>
    <alternativeName>
        <fullName>Ribonucleotide reductase R2 subunit homolog</fullName>
    </alternativeName>
    <alternativeName>
        <fullName>Ribonucleotide reductase small subunit homolog</fullName>
    </alternativeName>
</protein>
<organism>
    <name type="scientific">Mycobacterium tuberculosis (strain CDC 1551 / Oshkosh)</name>
    <dbReference type="NCBI Taxonomy" id="83331"/>
    <lineage>
        <taxon>Bacteria</taxon>
        <taxon>Bacillati</taxon>
        <taxon>Actinomycetota</taxon>
        <taxon>Actinomycetes</taxon>
        <taxon>Mycobacteriales</taxon>
        <taxon>Mycobacteriaceae</taxon>
        <taxon>Mycobacterium</taxon>
        <taxon>Mycobacterium tuberculosis complex</taxon>
    </lineage>
</organism>
<accession>P9WH68</accession>
<accession>L0T624</accession>
<accession>P96416</accession>
<accession>Q7DA78</accession>
<sequence length="314" mass="35634">MTRTRSGSLAAGGLNWASLPLKLFAGGNAKFWDPADIDFTRDRADWEKLSDDERDYATRLCTQFIAGEEAVTEDIQPFMSAMRAEGRLADEMYLTQFAFEEAKHTQVFRMWLDAVGISEDLHRYLDDLPAYRQIFYAELPECLNALSADPSPAAQVRASVTYNHIVEGMLALTGYYAWHKICVERAILPGMQELVRRIGDDERRHMAWGTFTCRRHVAADDANWTVFETRMNELIPLALRLIEEGFALYGDQPPFDLSKDDFLQYSTDKGMRRFGTISNARGRPVAEIDVDYSPAQLEDTFADEDRRTLAAASA</sequence>
<dbReference type="EC" id="1.-.-.-" evidence="1"/>
<dbReference type="EMBL" id="AE000516">
    <property type="protein sequence ID" value="AAK44464.1"/>
    <property type="molecule type" value="Genomic_DNA"/>
</dbReference>
<dbReference type="PIR" id="G70962">
    <property type="entry name" value="G70962"/>
</dbReference>
<dbReference type="RefSeq" id="WP_003401270.1">
    <property type="nucleotide sequence ID" value="NZ_KK341227.1"/>
</dbReference>
<dbReference type="SMR" id="P9WH68"/>
<dbReference type="KEGG" id="mtc:MT0244"/>
<dbReference type="PATRIC" id="fig|83331.31.peg.264"/>
<dbReference type="HOGENOM" id="CLU_072736_0_0_11"/>
<dbReference type="Proteomes" id="UP000001020">
    <property type="component" value="Chromosome"/>
</dbReference>
<dbReference type="GO" id="GO:0046872">
    <property type="term" value="F:metal ion binding"/>
    <property type="evidence" value="ECO:0007669"/>
    <property type="project" value="UniProtKB-KW"/>
</dbReference>
<dbReference type="GO" id="GO:0016491">
    <property type="term" value="F:oxidoreductase activity"/>
    <property type="evidence" value="ECO:0007669"/>
    <property type="project" value="UniProtKB-KW"/>
</dbReference>
<dbReference type="GO" id="GO:0009263">
    <property type="term" value="P:deoxyribonucleotide biosynthetic process"/>
    <property type="evidence" value="ECO:0007669"/>
    <property type="project" value="InterPro"/>
</dbReference>
<dbReference type="CDD" id="cd07911">
    <property type="entry name" value="RNRR2_Rv0233_like"/>
    <property type="match status" value="1"/>
</dbReference>
<dbReference type="FunFam" id="1.10.620.20:FF:000012">
    <property type="entry name" value="R2-like ligand binding oxidase"/>
    <property type="match status" value="1"/>
</dbReference>
<dbReference type="Gene3D" id="1.10.620.20">
    <property type="entry name" value="Ribonucleotide Reductase, subunit A"/>
    <property type="match status" value="1"/>
</dbReference>
<dbReference type="InterPro" id="IPR009078">
    <property type="entry name" value="Ferritin-like_SF"/>
</dbReference>
<dbReference type="InterPro" id="IPR033908">
    <property type="entry name" value="R2LOX"/>
</dbReference>
<dbReference type="InterPro" id="IPR012348">
    <property type="entry name" value="RNR-like"/>
</dbReference>
<dbReference type="InterPro" id="IPR000358">
    <property type="entry name" value="RNR_small_fam"/>
</dbReference>
<dbReference type="NCBIfam" id="NF006199">
    <property type="entry name" value="PRK08326.1-2"/>
    <property type="match status" value="1"/>
</dbReference>
<dbReference type="NCBIfam" id="NF006200">
    <property type="entry name" value="PRK08326.1-3"/>
    <property type="match status" value="1"/>
</dbReference>
<dbReference type="NCBIfam" id="NF006201">
    <property type="entry name" value="PRK08326.1-4"/>
    <property type="match status" value="1"/>
</dbReference>
<dbReference type="Pfam" id="PF00268">
    <property type="entry name" value="Ribonuc_red_sm"/>
    <property type="match status" value="1"/>
</dbReference>
<dbReference type="SUPFAM" id="SSF47240">
    <property type="entry name" value="Ferritin-like"/>
    <property type="match status" value="1"/>
</dbReference>
<gene>
    <name type="primary">nrdB</name>
    <name type="ordered locus">MT0244</name>
</gene>